<reference key="1">
    <citation type="journal article" date="2004" name="Nat. Genet.">
        <title>Complete sequencing and characterization of 21,243 full-length human cDNAs.</title>
        <authorList>
            <person name="Ota T."/>
            <person name="Suzuki Y."/>
            <person name="Nishikawa T."/>
            <person name="Otsuki T."/>
            <person name="Sugiyama T."/>
            <person name="Irie R."/>
            <person name="Wakamatsu A."/>
            <person name="Hayashi K."/>
            <person name="Sato H."/>
            <person name="Nagai K."/>
            <person name="Kimura K."/>
            <person name="Makita H."/>
            <person name="Sekine M."/>
            <person name="Obayashi M."/>
            <person name="Nishi T."/>
            <person name="Shibahara T."/>
            <person name="Tanaka T."/>
            <person name="Ishii S."/>
            <person name="Yamamoto J."/>
            <person name="Saito K."/>
            <person name="Kawai Y."/>
            <person name="Isono Y."/>
            <person name="Nakamura Y."/>
            <person name="Nagahari K."/>
            <person name="Murakami K."/>
            <person name="Yasuda T."/>
            <person name="Iwayanagi T."/>
            <person name="Wagatsuma M."/>
            <person name="Shiratori A."/>
            <person name="Sudo H."/>
            <person name="Hosoiri T."/>
            <person name="Kaku Y."/>
            <person name="Kodaira H."/>
            <person name="Kondo H."/>
            <person name="Sugawara M."/>
            <person name="Takahashi M."/>
            <person name="Kanda K."/>
            <person name="Yokoi T."/>
            <person name="Furuya T."/>
            <person name="Kikkawa E."/>
            <person name="Omura Y."/>
            <person name="Abe K."/>
            <person name="Kamihara K."/>
            <person name="Katsuta N."/>
            <person name="Sato K."/>
            <person name="Tanikawa M."/>
            <person name="Yamazaki M."/>
            <person name="Ninomiya K."/>
            <person name="Ishibashi T."/>
            <person name="Yamashita H."/>
            <person name="Murakawa K."/>
            <person name="Fujimori K."/>
            <person name="Tanai H."/>
            <person name="Kimata M."/>
            <person name="Watanabe M."/>
            <person name="Hiraoka S."/>
            <person name="Chiba Y."/>
            <person name="Ishida S."/>
            <person name="Ono Y."/>
            <person name="Takiguchi S."/>
            <person name="Watanabe S."/>
            <person name="Yosida M."/>
            <person name="Hotuta T."/>
            <person name="Kusano J."/>
            <person name="Kanehori K."/>
            <person name="Takahashi-Fujii A."/>
            <person name="Hara H."/>
            <person name="Tanase T.-O."/>
            <person name="Nomura Y."/>
            <person name="Togiya S."/>
            <person name="Komai F."/>
            <person name="Hara R."/>
            <person name="Takeuchi K."/>
            <person name="Arita M."/>
            <person name="Imose N."/>
            <person name="Musashino K."/>
            <person name="Yuuki H."/>
            <person name="Oshima A."/>
            <person name="Sasaki N."/>
            <person name="Aotsuka S."/>
            <person name="Yoshikawa Y."/>
            <person name="Matsunawa H."/>
            <person name="Ichihara T."/>
            <person name="Shiohata N."/>
            <person name="Sano S."/>
            <person name="Moriya S."/>
            <person name="Momiyama H."/>
            <person name="Satoh N."/>
            <person name="Takami S."/>
            <person name="Terashima Y."/>
            <person name="Suzuki O."/>
            <person name="Nakagawa S."/>
            <person name="Senoh A."/>
            <person name="Mizoguchi H."/>
            <person name="Goto Y."/>
            <person name="Shimizu F."/>
            <person name="Wakebe H."/>
            <person name="Hishigaki H."/>
            <person name="Watanabe T."/>
            <person name="Sugiyama A."/>
            <person name="Takemoto M."/>
            <person name="Kawakami B."/>
            <person name="Yamazaki M."/>
            <person name="Watanabe K."/>
            <person name="Kumagai A."/>
            <person name="Itakura S."/>
            <person name="Fukuzumi Y."/>
            <person name="Fujimori Y."/>
            <person name="Komiyama M."/>
            <person name="Tashiro H."/>
            <person name="Tanigami A."/>
            <person name="Fujiwara T."/>
            <person name="Ono T."/>
            <person name="Yamada K."/>
            <person name="Fujii Y."/>
            <person name="Ozaki K."/>
            <person name="Hirao M."/>
            <person name="Ohmori Y."/>
            <person name="Kawabata A."/>
            <person name="Hikiji T."/>
            <person name="Kobatake N."/>
            <person name="Inagaki H."/>
            <person name="Ikema Y."/>
            <person name="Okamoto S."/>
            <person name="Okitani R."/>
            <person name="Kawakami T."/>
            <person name="Noguchi S."/>
            <person name="Itoh T."/>
            <person name="Shigeta K."/>
            <person name="Senba T."/>
            <person name="Matsumura K."/>
            <person name="Nakajima Y."/>
            <person name="Mizuno T."/>
            <person name="Morinaga M."/>
            <person name="Sasaki M."/>
            <person name="Togashi T."/>
            <person name="Oyama M."/>
            <person name="Hata H."/>
            <person name="Watanabe M."/>
            <person name="Komatsu T."/>
            <person name="Mizushima-Sugano J."/>
            <person name="Satoh T."/>
            <person name="Shirai Y."/>
            <person name="Takahashi Y."/>
            <person name="Nakagawa K."/>
            <person name="Okumura K."/>
            <person name="Nagase T."/>
            <person name="Nomura N."/>
            <person name="Kikuchi H."/>
            <person name="Masuho Y."/>
            <person name="Yamashita R."/>
            <person name="Nakai K."/>
            <person name="Yada T."/>
            <person name="Nakamura Y."/>
            <person name="Ohara O."/>
            <person name="Isogai T."/>
            <person name="Sugano S."/>
        </authorList>
    </citation>
    <scope>NUCLEOTIDE SEQUENCE [LARGE SCALE MRNA] (ISOFORM 1)</scope>
    <source>
        <tissue>Caudate nucleus</tissue>
    </source>
</reference>
<reference key="2">
    <citation type="journal article" date="2006" name="Nature">
        <title>The DNA sequence and biological annotation of human chromosome 1.</title>
        <authorList>
            <person name="Gregory S.G."/>
            <person name="Barlow K.F."/>
            <person name="McLay K.E."/>
            <person name="Kaul R."/>
            <person name="Swarbreck D."/>
            <person name="Dunham A."/>
            <person name="Scott C.E."/>
            <person name="Howe K.L."/>
            <person name="Woodfine K."/>
            <person name="Spencer C.C.A."/>
            <person name="Jones M.C."/>
            <person name="Gillson C."/>
            <person name="Searle S."/>
            <person name="Zhou Y."/>
            <person name="Kokocinski F."/>
            <person name="McDonald L."/>
            <person name="Evans R."/>
            <person name="Phillips K."/>
            <person name="Atkinson A."/>
            <person name="Cooper R."/>
            <person name="Jones C."/>
            <person name="Hall R.E."/>
            <person name="Andrews T.D."/>
            <person name="Lloyd C."/>
            <person name="Ainscough R."/>
            <person name="Almeida J.P."/>
            <person name="Ambrose K.D."/>
            <person name="Anderson F."/>
            <person name="Andrew R.W."/>
            <person name="Ashwell R.I.S."/>
            <person name="Aubin K."/>
            <person name="Babbage A.K."/>
            <person name="Bagguley C.L."/>
            <person name="Bailey J."/>
            <person name="Beasley H."/>
            <person name="Bethel G."/>
            <person name="Bird C.P."/>
            <person name="Bray-Allen S."/>
            <person name="Brown J.Y."/>
            <person name="Brown A.J."/>
            <person name="Buckley D."/>
            <person name="Burton J."/>
            <person name="Bye J."/>
            <person name="Carder C."/>
            <person name="Chapman J.C."/>
            <person name="Clark S.Y."/>
            <person name="Clarke G."/>
            <person name="Clee C."/>
            <person name="Cobley V."/>
            <person name="Collier R.E."/>
            <person name="Corby N."/>
            <person name="Coville G.J."/>
            <person name="Davies J."/>
            <person name="Deadman R."/>
            <person name="Dunn M."/>
            <person name="Earthrowl M."/>
            <person name="Ellington A.G."/>
            <person name="Errington H."/>
            <person name="Frankish A."/>
            <person name="Frankland J."/>
            <person name="French L."/>
            <person name="Garner P."/>
            <person name="Garnett J."/>
            <person name="Gay L."/>
            <person name="Ghori M.R.J."/>
            <person name="Gibson R."/>
            <person name="Gilby L.M."/>
            <person name="Gillett W."/>
            <person name="Glithero R.J."/>
            <person name="Grafham D.V."/>
            <person name="Griffiths C."/>
            <person name="Griffiths-Jones S."/>
            <person name="Grocock R."/>
            <person name="Hammond S."/>
            <person name="Harrison E.S.I."/>
            <person name="Hart E."/>
            <person name="Haugen E."/>
            <person name="Heath P.D."/>
            <person name="Holmes S."/>
            <person name="Holt K."/>
            <person name="Howden P.J."/>
            <person name="Hunt A.R."/>
            <person name="Hunt S.E."/>
            <person name="Hunter G."/>
            <person name="Isherwood J."/>
            <person name="James R."/>
            <person name="Johnson C."/>
            <person name="Johnson D."/>
            <person name="Joy A."/>
            <person name="Kay M."/>
            <person name="Kershaw J.K."/>
            <person name="Kibukawa M."/>
            <person name="Kimberley A.M."/>
            <person name="King A."/>
            <person name="Knights A.J."/>
            <person name="Lad H."/>
            <person name="Laird G."/>
            <person name="Lawlor S."/>
            <person name="Leongamornlert D.A."/>
            <person name="Lloyd D.M."/>
            <person name="Loveland J."/>
            <person name="Lovell J."/>
            <person name="Lush M.J."/>
            <person name="Lyne R."/>
            <person name="Martin S."/>
            <person name="Mashreghi-Mohammadi M."/>
            <person name="Matthews L."/>
            <person name="Matthews N.S.W."/>
            <person name="McLaren S."/>
            <person name="Milne S."/>
            <person name="Mistry S."/>
            <person name="Moore M.J.F."/>
            <person name="Nickerson T."/>
            <person name="O'Dell C.N."/>
            <person name="Oliver K."/>
            <person name="Palmeiri A."/>
            <person name="Palmer S.A."/>
            <person name="Parker A."/>
            <person name="Patel D."/>
            <person name="Pearce A.V."/>
            <person name="Peck A.I."/>
            <person name="Pelan S."/>
            <person name="Phelps K."/>
            <person name="Phillimore B.J."/>
            <person name="Plumb R."/>
            <person name="Rajan J."/>
            <person name="Raymond C."/>
            <person name="Rouse G."/>
            <person name="Saenphimmachak C."/>
            <person name="Sehra H.K."/>
            <person name="Sheridan E."/>
            <person name="Shownkeen R."/>
            <person name="Sims S."/>
            <person name="Skuce C.D."/>
            <person name="Smith M."/>
            <person name="Steward C."/>
            <person name="Subramanian S."/>
            <person name="Sycamore N."/>
            <person name="Tracey A."/>
            <person name="Tromans A."/>
            <person name="Van Helmond Z."/>
            <person name="Wall M."/>
            <person name="Wallis J.M."/>
            <person name="White S."/>
            <person name="Whitehead S.L."/>
            <person name="Wilkinson J.E."/>
            <person name="Willey D.L."/>
            <person name="Williams H."/>
            <person name="Wilming L."/>
            <person name="Wray P.W."/>
            <person name="Wu Z."/>
            <person name="Coulson A."/>
            <person name="Vaudin M."/>
            <person name="Sulston J.E."/>
            <person name="Durbin R.M."/>
            <person name="Hubbard T."/>
            <person name="Wooster R."/>
            <person name="Dunham I."/>
            <person name="Carter N.P."/>
            <person name="McVean G."/>
            <person name="Ross M.T."/>
            <person name="Harrow J."/>
            <person name="Olson M.V."/>
            <person name="Beck S."/>
            <person name="Rogers J."/>
            <person name="Bentley D.R."/>
        </authorList>
    </citation>
    <scope>NUCLEOTIDE SEQUENCE [LARGE SCALE GENOMIC DNA]</scope>
</reference>
<reference key="3">
    <citation type="journal article" date="2004" name="Genome Res.">
        <title>The status, quality, and expansion of the NIH full-length cDNA project: the Mammalian Gene Collection (MGC).</title>
        <authorList>
            <consortium name="The MGC Project Team"/>
        </authorList>
    </citation>
    <scope>NUCLEOTIDE SEQUENCE [LARGE SCALE MRNA] (ISOFORMS 1 AND 2)</scope>
    <source>
        <tissue>Pancreas</tissue>
        <tissue>Testis</tissue>
    </source>
</reference>
<reference key="4">
    <citation type="journal article" date="2007" name="BMC Genomics">
        <title>The full-ORF clone resource of the German cDNA consortium.</title>
        <authorList>
            <person name="Bechtel S."/>
            <person name="Rosenfelder H."/>
            <person name="Duda A."/>
            <person name="Schmidt C.P."/>
            <person name="Ernst U."/>
            <person name="Wellenreuther R."/>
            <person name="Mehrle A."/>
            <person name="Schuster C."/>
            <person name="Bahr A."/>
            <person name="Bloecker H."/>
            <person name="Heubner D."/>
            <person name="Hoerlein A."/>
            <person name="Michel G."/>
            <person name="Wedler H."/>
            <person name="Koehrer K."/>
            <person name="Ottenwaelder B."/>
            <person name="Poustka A."/>
            <person name="Wiemann S."/>
            <person name="Schupp I."/>
        </authorList>
    </citation>
    <scope>NUCLEOTIDE SEQUENCE [LARGE SCALE MRNA] OF 3-306 (ISOFORM 1)</scope>
    <source>
        <tissue>Stomach</tissue>
    </source>
</reference>
<reference key="5">
    <citation type="journal article" date="2007" name="Dev. Cell">
        <title>A beta-catenin-independent dorsalization pathway activated by Axin/JNK signaling and antagonized by aida.</title>
        <authorList>
            <person name="Rui Y."/>
            <person name="Xu Z."/>
            <person name="Xiong B."/>
            <person name="Cao Y."/>
            <person name="Lin S."/>
            <person name="Zhang M."/>
            <person name="Chan S.-C."/>
            <person name="Luo W."/>
            <person name="Han Y."/>
            <person name="Lu Z."/>
            <person name="Ye Z."/>
            <person name="Zhou H.-M."/>
            <person name="Han J."/>
            <person name="Meng A."/>
            <person name="Lin S.-C."/>
        </authorList>
    </citation>
    <scope>TISSUE SPECIFICITY</scope>
</reference>
<reference key="6">
    <citation type="journal article" date="2008" name="Proc. Natl. Acad. Sci. U.S.A.">
        <title>A quantitative atlas of mitotic phosphorylation.</title>
        <authorList>
            <person name="Dephoure N."/>
            <person name="Zhou C."/>
            <person name="Villen J."/>
            <person name="Beausoleil S.A."/>
            <person name="Bakalarski C.E."/>
            <person name="Elledge S.J."/>
            <person name="Gygi S.P."/>
        </authorList>
    </citation>
    <scope>IDENTIFICATION BY MASS SPECTROMETRY [LARGE SCALE ANALYSIS]</scope>
    <source>
        <tissue>Cervix carcinoma</tissue>
    </source>
</reference>
<reference key="7">
    <citation type="journal article" date="2009" name="Sci. Signal.">
        <title>Quantitative phosphoproteomic analysis of T cell receptor signaling reveals system-wide modulation of protein-protein interactions.</title>
        <authorList>
            <person name="Mayya V."/>
            <person name="Lundgren D.H."/>
            <person name="Hwang S.-I."/>
            <person name="Rezaul K."/>
            <person name="Wu L."/>
            <person name="Eng J.K."/>
            <person name="Rodionov V."/>
            <person name="Han D.K."/>
        </authorList>
    </citation>
    <scope>PHOSPHORYLATION [LARGE SCALE ANALYSIS] AT SER-144</scope>
    <scope>IDENTIFICATION BY MASS SPECTROMETRY [LARGE SCALE ANALYSIS]</scope>
    <source>
        <tissue>Leukemic T-cell</tissue>
    </source>
</reference>
<reference key="8">
    <citation type="journal article" date="2011" name="BMC Syst. Biol.">
        <title>Initial characterization of the human central proteome.</title>
        <authorList>
            <person name="Burkard T.R."/>
            <person name="Planyavsky M."/>
            <person name="Kaupe I."/>
            <person name="Breitwieser F.P."/>
            <person name="Buerckstuemmer T."/>
            <person name="Bennett K.L."/>
            <person name="Superti-Furga G."/>
            <person name="Colinge J."/>
        </authorList>
    </citation>
    <scope>IDENTIFICATION BY MASS SPECTROMETRY [LARGE SCALE ANALYSIS]</scope>
</reference>
<sequence length="306" mass="35023">MSEVTRSLLQRWGASFRRGADFDSWGQLVEAIDEYQILARHLQKEAQAQHNNSEFTEEQKKTIGKIATCLELRSAALQSTQSQEEFKLEDLKKLEPILKNILTYNKEFPFDVQPVPLRRILAPGEEENLEFEEDEEEGGAGAGSPDSFPARVPGTLLPRLPSEPGMTLLTIRIEKIGLKDAGQCIDPYITVSVKDLNGIDLTPVQDTPVASRKEDTYVHFNVDIELQKHVEKLTKGAAIFFEFKHYKPKKRFTSTKCFAFMEMDEIKPGPIVIELYKKPTDFKRKKLQLLTKKPLYLHLHQTLHKE</sequence>
<accession>Q96BJ3</accession>
<accession>A8K1F0</accession>
<accession>Q49A81</accession>
<accession>Q5JRA4</accession>
<accession>Q658P1</accession>
<accession>Q9H9E8</accession>
<name>AIDA_HUMAN</name>
<organism>
    <name type="scientific">Homo sapiens</name>
    <name type="common">Human</name>
    <dbReference type="NCBI Taxonomy" id="9606"/>
    <lineage>
        <taxon>Eukaryota</taxon>
        <taxon>Metazoa</taxon>
        <taxon>Chordata</taxon>
        <taxon>Craniata</taxon>
        <taxon>Vertebrata</taxon>
        <taxon>Euteleostomi</taxon>
        <taxon>Mammalia</taxon>
        <taxon>Eutheria</taxon>
        <taxon>Euarchontoglires</taxon>
        <taxon>Primates</taxon>
        <taxon>Haplorrhini</taxon>
        <taxon>Catarrhini</taxon>
        <taxon>Hominidae</taxon>
        <taxon>Homo</taxon>
    </lineage>
</organism>
<evidence type="ECO:0000250" key="1"/>
<evidence type="ECO:0000255" key="2"/>
<evidence type="ECO:0000255" key="3">
    <source>
        <dbReference type="PROSITE-ProRule" id="PRU01259"/>
    </source>
</evidence>
<evidence type="ECO:0000256" key="4">
    <source>
        <dbReference type="SAM" id="MobiDB-lite"/>
    </source>
</evidence>
<evidence type="ECO:0000269" key="5">
    <source>
    </source>
</evidence>
<evidence type="ECO:0000303" key="6">
    <source>
    </source>
</evidence>
<evidence type="ECO:0000305" key="7"/>
<evidence type="ECO:0007744" key="8">
    <source>
    </source>
</evidence>
<proteinExistence type="evidence at protein level"/>
<protein>
    <recommendedName>
        <fullName>Axin interactor, dorsalization-associated protein</fullName>
    </recommendedName>
    <alternativeName>
        <fullName>Axin interaction partner and dorsalization antagonist</fullName>
    </alternativeName>
</protein>
<comment type="function">
    <text evidence="1">Acts as a ventralizing factor during embryogenesis. Inhibits axin-mediated JNK activation by binding axin and disrupting axin homodimerization. This in turn antagonizes a Wnt/beta-catenin-independent dorsalization pathway activated by AXIN/JNK-signaling (By similarity).</text>
</comment>
<comment type="subunit">
    <text evidence="1">Interacts with AXIN1.</text>
</comment>
<comment type="interaction">
    <interactant intactId="EBI-4401674">
        <id>Q96BJ3</id>
    </interactant>
    <interactant intactId="EBI-742054">
        <id>Q96D03</id>
        <label>DDIT4L</label>
    </interactant>
    <organismsDiffer>false</organismsDiffer>
    <experiments>3</experiments>
</comment>
<comment type="interaction">
    <interactant intactId="EBI-4401674">
        <id>Q96BJ3</id>
    </interactant>
    <interactant intactId="EBI-1046350">
        <id>Q9UJV9</id>
        <label>DDX41</label>
    </interactant>
    <organismsDiffer>false</organismsDiffer>
    <experiments>3</experiments>
</comment>
<comment type="interaction">
    <interactant intactId="EBI-4401674">
        <id>Q96BJ3</id>
    </interactant>
    <interactant intactId="EBI-11989522">
        <id>Q7Z589-5</id>
        <label>EMSY</label>
    </interactant>
    <organismsDiffer>false</organismsDiffer>
    <experiments>3</experiments>
</comment>
<comment type="interaction">
    <interactant intactId="EBI-4401674">
        <id>Q96BJ3</id>
    </interactant>
    <interactant intactId="EBI-8638992">
        <id>Q9NWS6</id>
        <label>FAM118A</label>
    </interactant>
    <organismsDiffer>false</organismsDiffer>
    <experiments>6</experiments>
</comment>
<comment type="interaction">
    <interactant intactId="EBI-4401674">
        <id>Q96BJ3</id>
    </interactant>
    <interactant intactId="EBI-739832">
        <id>Q8TBB1</id>
        <label>LNX1</label>
    </interactant>
    <organismsDiffer>false</organismsDiffer>
    <experiments>3</experiments>
</comment>
<comment type="interaction">
    <interactant intactId="EBI-4401674">
        <id>Q96BJ3</id>
    </interactant>
    <interactant intactId="EBI-721782">
        <id>Q96BK5</id>
        <label>PINX1</label>
    </interactant>
    <organismsDiffer>false</organismsDiffer>
    <experiments>4</experiments>
</comment>
<comment type="interaction">
    <interactant intactId="EBI-4401674">
        <id>Q96BJ3</id>
    </interactant>
    <interactant intactId="EBI-1054835">
        <id>P83881</id>
        <label>RPL36A</label>
    </interactant>
    <organismsDiffer>false</organismsDiffer>
    <experiments>3</experiments>
</comment>
<comment type="alternative products">
    <event type="alternative splicing"/>
    <isoform>
        <id>Q96BJ3-1</id>
        <name>1</name>
        <sequence type="displayed"/>
    </isoform>
    <isoform>
        <id>Q96BJ3-2</id>
        <name>2</name>
        <sequence type="described" ref="VSP_028322"/>
    </isoform>
    <isoform>
        <id>Q96BJ3-3</id>
        <name>3</name>
        <sequence type="described" ref="VSP_034661"/>
    </isoform>
</comment>
<comment type="tissue specificity">
    <text evidence="5">Widely expressed in adult tissues, with highest expression in the heart and skeletal muscle.</text>
</comment>
<comment type="similarity">
    <text evidence="3 7">Belongs to the AIDA family.</text>
</comment>
<feature type="chain" id="PRO_0000305277" description="Axin interactor, dorsalization-associated protein">
    <location>
        <begin position="1"/>
        <end position="306"/>
    </location>
</feature>
<feature type="domain" description="C2 Aida-type" evidence="3">
    <location>
        <begin position="157"/>
        <end position="304"/>
    </location>
</feature>
<feature type="region of interest" description="Disordered" evidence="4">
    <location>
        <begin position="128"/>
        <end position="153"/>
    </location>
</feature>
<feature type="region of interest" description="Axin-binding" evidence="1">
    <location>
        <begin position="154"/>
        <end position="221"/>
    </location>
</feature>
<feature type="coiled-coil region" evidence="2">
    <location>
        <begin position="27"/>
        <end position="62"/>
    </location>
</feature>
<feature type="compositionally biased region" description="Acidic residues" evidence="4">
    <location>
        <begin position="128"/>
        <end position="138"/>
    </location>
</feature>
<feature type="modified residue" description="Phosphoserine" evidence="8">
    <location>
        <position position="144"/>
    </location>
</feature>
<feature type="splice variant" id="VSP_028322" description="In isoform 2." evidence="6">
    <location>
        <begin position="1"/>
        <end position="165"/>
    </location>
</feature>
<feature type="splice variant" id="VSP_034661" description="In isoform 3." evidence="7">
    <location>
        <begin position="155"/>
        <end position="236"/>
    </location>
</feature>
<feature type="sequence conflict" description="In Ref. 1; BAB14281." evidence="7" ref="1">
    <original>E</original>
    <variation>G</variation>
    <location>
        <position position="130"/>
    </location>
</feature>
<keyword id="KW-0025">Alternative splicing</keyword>
<keyword id="KW-0175">Coiled coil</keyword>
<keyword id="KW-0217">Developmental protein</keyword>
<keyword id="KW-0597">Phosphoprotein</keyword>
<keyword id="KW-1267">Proteomics identification</keyword>
<keyword id="KW-1185">Reference proteome</keyword>
<gene>
    <name type="primary">AIDA</name>
    <name type="synonym">C1orf80</name>
</gene>
<dbReference type="EMBL" id="AK022868">
    <property type="protein sequence ID" value="BAB14281.1"/>
    <property type="molecule type" value="mRNA"/>
</dbReference>
<dbReference type="EMBL" id="AK289865">
    <property type="protein sequence ID" value="BAF82554.1"/>
    <property type="molecule type" value="mRNA"/>
</dbReference>
<dbReference type="EMBL" id="AL392172">
    <property type="status" value="NOT_ANNOTATED_CDS"/>
    <property type="molecule type" value="Genomic_DNA"/>
</dbReference>
<dbReference type="EMBL" id="AL592148">
    <property type="status" value="NOT_ANNOTATED_CDS"/>
    <property type="molecule type" value="Genomic_DNA"/>
</dbReference>
<dbReference type="EMBL" id="BC015535">
    <property type="protein sequence ID" value="AAH15535.1"/>
    <property type="molecule type" value="mRNA"/>
</dbReference>
<dbReference type="EMBL" id="BC043142">
    <property type="protein sequence ID" value="AAH43142.1"/>
    <property type="molecule type" value="mRNA"/>
</dbReference>
<dbReference type="EMBL" id="BC067805">
    <property type="protein sequence ID" value="AAH67805.1"/>
    <property type="molecule type" value="mRNA"/>
</dbReference>
<dbReference type="EMBL" id="AL833718">
    <property type="protein sequence ID" value="CAH56257.1"/>
    <property type="molecule type" value="mRNA"/>
</dbReference>
<dbReference type="CCDS" id="CCDS1533.1">
    <molecule id="Q96BJ3-1"/>
</dbReference>
<dbReference type="RefSeq" id="NP_073742.2">
    <molecule id="Q96BJ3-1"/>
    <property type="nucleotide sequence ID" value="NM_022831.4"/>
</dbReference>
<dbReference type="RefSeq" id="XP_054194291.1">
    <molecule id="Q96BJ3-2"/>
    <property type="nucleotide sequence ID" value="XM_054338316.1"/>
</dbReference>
<dbReference type="BMRB" id="Q96BJ3"/>
<dbReference type="SMR" id="Q96BJ3"/>
<dbReference type="BioGRID" id="122326">
    <property type="interactions" value="32"/>
</dbReference>
<dbReference type="FunCoup" id="Q96BJ3">
    <property type="interactions" value="442"/>
</dbReference>
<dbReference type="IntAct" id="Q96BJ3">
    <property type="interactions" value="23"/>
</dbReference>
<dbReference type="MINT" id="Q96BJ3"/>
<dbReference type="STRING" id="9606.ENSP00000339161"/>
<dbReference type="iPTMnet" id="Q96BJ3"/>
<dbReference type="PhosphoSitePlus" id="Q96BJ3"/>
<dbReference type="SwissPalm" id="Q96BJ3"/>
<dbReference type="BioMuta" id="AIDA"/>
<dbReference type="DMDM" id="74751770"/>
<dbReference type="jPOST" id="Q96BJ3"/>
<dbReference type="MassIVE" id="Q96BJ3"/>
<dbReference type="PaxDb" id="9606-ENSP00000339161"/>
<dbReference type="PeptideAtlas" id="Q96BJ3"/>
<dbReference type="ProteomicsDB" id="76080">
    <molecule id="Q96BJ3-1"/>
</dbReference>
<dbReference type="ProteomicsDB" id="76081">
    <molecule id="Q96BJ3-2"/>
</dbReference>
<dbReference type="ProteomicsDB" id="76082">
    <molecule id="Q96BJ3-3"/>
</dbReference>
<dbReference type="Pumba" id="Q96BJ3"/>
<dbReference type="Antibodypedia" id="34630">
    <property type="antibodies" value="138 antibodies from 23 providers"/>
</dbReference>
<dbReference type="DNASU" id="64853"/>
<dbReference type="Ensembl" id="ENST00000340020.11">
    <molecule id="Q96BJ3-1"/>
    <property type="protein sequence ID" value="ENSP00000339161.6"/>
    <property type="gene ID" value="ENSG00000186063.13"/>
</dbReference>
<dbReference type="Ensembl" id="ENST00000355727.3">
    <molecule id="Q96BJ3-3"/>
    <property type="protein sequence ID" value="ENSP00000347964.2"/>
    <property type="gene ID" value="ENSG00000186063.13"/>
</dbReference>
<dbReference type="GeneID" id="64853"/>
<dbReference type="KEGG" id="hsa:64853"/>
<dbReference type="MANE-Select" id="ENST00000340020.11">
    <property type="protein sequence ID" value="ENSP00000339161.6"/>
    <property type="RefSeq nucleotide sequence ID" value="NM_022831.4"/>
    <property type="RefSeq protein sequence ID" value="NP_073742.2"/>
</dbReference>
<dbReference type="UCSC" id="uc001hnn.4">
    <molecule id="Q96BJ3-1"/>
    <property type="organism name" value="human"/>
</dbReference>
<dbReference type="AGR" id="HGNC:25761"/>
<dbReference type="CTD" id="64853"/>
<dbReference type="DisGeNET" id="64853"/>
<dbReference type="GeneCards" id="AIDA"/>
<dbReference type="HGNC" id="HGNC:25761">
    <property type="gene designation" value="AIDA"/>
</dbReference>
<dbReference type="HPA" id="ENSG00000186063">
    <property type="expression patterns" value="Low tissue specificity"/>
</dbReference>
<dbReference type="MIM" id="612375">
    <property type="type" value="gene"/>
</dbReference>
<dbReference type="neXtProt" id="NX_Q96BJ3"/>
<dbReference type="OpenTargets" id="ENSG00000186063"/>
<dbReference type="PharmGKB" id="PA162376104"/>
<dbReference type="VEuPathDB" id="HostDB:ENSG00000186063"/>
<dbReference type="eggNOG" id="ENOG502QSD5">
    <property type="taxonomic scope" value="Eukaryota"/>
</dbReference>
<dbReference type="GeneTree" id="ENSGT00390000016465"/>
<dbReference type="HOGENOM" id="CLU_064322_0_0_1"/>
<dbReference type="InParanoid" id="Q96BJ3"/>
<dbReference type="OMA" id="KLHAAWC"/>
<dbReference type="OrthoDB" id="428576at2759"/>
<dbReference type="PAN-GO" id="Q96BJ3">
    <property type="GO annotations" value="3 GO annotations based on evolutionary models"/>
</dbReference>
<dbReference type="PhylomeDB" id="Q96BJ3"/>
<dbReference type="TreeFam" id="TF328541"/>
<dbReference type="PathwayCommons" id="Q96BJ3"/>
<dbReference type="SignaLink" id="Q96BJ3"/>
<dbReference type="BioGRID-ORCS" id="64853">
    <property type="hits" value="38 hits in 1116 CRISPR screens"/>
</dbReference>
<dbReference type="ChiTaRS" id="AIDA">
    <property type="organism name" value="human"/>
</dbReference>
<dbReference type="GenomeRNAi" id="64853"/>
<dbReference type="Pharos" id="Q96BJ3">
    <property type="development level" value="Tbio"/>
</dbReference>
<dbReference type="PRO" id="PR:Q96BJ3"/>
<dbReference type="Proteomes" id="UP000005640">
    <property type="component" value="Chromosome 1"/>
</dbReference>
<dbReference type="RNAct" id="Q96BJ3">
    <property type="molecule type" value="protein"/>
</dbReference>
<dbReference type="Bgee" id="ENSG00000186063">
    <property type="expression patterns" value="Expressed in parietal pleura and 193 other cell types or tissues"/>
</dbReference>
<dbReference type="GO" id="GO:0005737">
    <property type="term" value="C:cytoplasm"/>
    <property type="evidence" value="ECO:0007669"/>
    <property type="project" value="Ensembl"/>
</dbReference>
<dbReference type="GO" id="GO:0016020">
    <property type="term" value="C:membrane"/>
    <property type="evidence" value="ECO:0000318"/>
    <property type="project" value="GO_Central"/>
</dbReference>
<dbReference type="GO" id="GO:0035091">
    <property type="term" value="F:phosphatidylinositol binding"/>
    <property type="evidence" value="ECO:0000318"/>
    <property type="project" value="GO_Central"/>
</dbReference>
<dbReference type="GO" id="GO:0019904">
    <property type="term" value="F:protein domain specific binding"/>
    <property type="evidence" value="ECO:0007669"/>
    <property type="project" value="Ensembl"/>
</dbReference>
<dbReference type="GO" id="GO:0048264">
    <property type="term" value="P:determination of ventral identity"/>
    <property type="evidence" value="ECO:0000318"/>
    <property type="project" value="GO_Central"/>
</dbReference>
<dbReference type="GO" id="GO:0009953">
    <property type="term" value="P:dorsal/ventral pattern formation"/>
    <property type="evidence" value="ECO:0000250"/>
    <property type="project" value="UniProtKB"/>
</dbReference>
<dbReference type="GO" id="GO:0046329">
    <property type="term" value="P:negative regulation of JNK cascade"/>
    <property type="evidence" value="ECO:0000250"/>
    <property type="project" value="UniProtKB"/>
</dbReference>
<dbReference type="GO" id="GO:0043508">
    <property type="term" value="P:negative regulation of JUN kinase activity"/>
    <property type="evidence" value="ECO:0000314"/>
    <property type="project" value="MGI"/>
</dbReference>
<dbReference type="GO" id="GO:0031333">
    <property type="term" value="P:negative regulation of protein-containing complex assembly"/>
    <property type="evidence" value="ECO:0000250"/>
    <property type="project" value="UniProtKB"/>
</dbReference>
<dbReference type="FunFam" id="1.20.120.360:FF:000001">
    <property type="entry name" value="Axin interactor, dorsalization-associated protein"/>
    <property type="match status" value="1"/>
</dbReference>
<dbReference type="FunFam" id="2.60.40.150:FF:000059">
    <property type="entry name" value="Axin interactor, dorsalization-associated protein"/>
    <property type="match status" value="1"/>
</dbReference>
<dbReference type="Gene3D" id="1.20.120.360">
    <property type="entry name" value="Axin interactor, dorsalization-associated protein, N-terminal domain"/>
    <property type="match status" value="1"/>
</dbReference>
<dbReference type="Gene3D" id="2.60.40.150">
    <property type="entry name" value="C2 domain"/>
    <property type="match status" value="1"/>
</dbReference>
<dbReference type="InterPro" id="IPR025939">
    <property type="entry name" value="Aida_C"/>
</dbReference>
<dbReference type="InterPro" id="IPR023421">
    <property type="entry name" value="AIDA_N"/>
</dbReference>
<dbReference type="InterPro" id="IPR036818">
    <property type="entry name" value="AIDA_N_sf"/>
</dbReference>
<dbReference type="InterPro" id="IPR035892">
    <property type="entry name" value="C2_domain_sf"/>
</dbReference>
<dbReference type="PANTHER" id="PTHR28654">
    <property type="entry name" value="AXIN INTERACTOR, DORSALIZATION-ASSOCIATED PROTEIN"/>
    <property type="match status" value="1"/>
</dbReference>
<dbReference type="PANTHER" id="PTHR28654:SF1">
    <property type="entry name" value="AXIN INTERACTOR, DORSALIZATION-ASSOCIATED PROTEIN"/>
    <property type="match status" value="1"/>
</dbReference>
<dbReference type="Pfam" id="PF14186">
    <property type="entry name" value="Aida_C2"/>
    <property type="match status" value="1"/>
</dbReference>
<dbReference type="Pfam" id="PF08910">
    <property type="entry name" value="Aida_N"/>
    <property type="match status" value="1"/>
</dbReference>
<dbReference type="SUPFAM" id="SSF109779">
    <property type="entry name" value="Domain from hypothetical 2610208m17rik protein"/>
    <property type="match status" value="1"/>
</dbReference>
<dbReference type="PROSITE" id="PS51911">
    <property type="entry name" value="C2_AIDA"/>
    <property type="match status" value="1"/>
</dbReference>